<name>SYV_STRA5</name>
<gene>
    <name evidence="1" type="primary">valS</name>
    <name type="ordered locus">SAG0445</name>
</gene>
<dbReference type="EC" id="6.1.1.9" evidence="1"/>
<dbReference type="EMBL" id="AE009948">
    <property type="protein sequence ID" value="AAM99348.1"/>
    <property type="molecule type" value="Genomic_DNA"/>
</dbReference>
<dbReference type="RefSeq" id="NP_687476.1">
    <property type="nucleotide sequence ID" value="NC_004116.1"/>
</dbReference>
<dbReference type="RefSeq" id="WP_000032207.1">
    <property type="nucleotide sequence ID" value="NC_004116.1"/>
</dbReference>
<dbReference type="SMR" id="Q8E1B5"/>
<dbReference type="STRING" id="208435.SAG0445"/>
<dbReference type="KEGG" id="sag:SAG0445"/>
<dbReference type="PATRIC" id="fig|208435.3.peg.442"/>
<dbReference type="HOGENOM" id="CLU_001493_0_2_9"/>
<dbReference type="OrthoDB" id="9810365at2"/>
<dbReference type="Proteomes" id="UP000000821">
    <property type="component" value="Chromosome"/>
</dbReference>
<dbReference type="GO" id="GO:0005829">
    <property type="term" value="C:cytosol"/>
    <property type="evidence" value="ECO:0007669"/>
    <property type="project" value="TreeGrafter"/>
</dbReference>
<dbReference type="GO" id="GO:0002161">
    <property type="term" value="F:aminoacyl-tRNA deacylase activity"/>
    <property type="evidence" value="ECO:0007669"/>
    <property type="project" value="InterPro"/>
</dbReference>
<dbReference type="GO" id="GO:0005524">
    <property type="term" value="F:ATP binding"/>
    <property type="evidence" value="ECO:0007669"/>
    <property type="project" value="UniProtKB-UniRule"/>
</dbReference>
<dbReference type="GO" id="GO:0004832">
    <property type="term" value="F:valine-tRNA ligase activity"/>
    <property type="evidence" value="ECO:0007669"/>
    <property type="project" value="UniProtKB-UniRule"/>
</dbReference>
<dbReference type="GO" id="GO:0006438">
    <property type="term" value="P:valyl-tRNA aminoacylation"/>
    <property type="evidence" value="ECO:0007669"/>
    <property type="project" value="UniProtKB-UniRule"/>
</dbReference>
<dbReference type="CDD" id="cd07962">
    <property type="entry name" value="Anticodon_Ia_Val"/>
    <property type="match status" value="1"/>
</dbReference>
<dbReference type="CDD" id="cd00817">
    <property type="entry name" value="ValRS_core"/>
    <property type="match status" value="1"/>
</dbReference>
<dbReference type="FunFam" id="1.10.287.380:FF:000001">
    <property type="entry name" value="Valine--tRNA ligase"/>
    <property type="match status" value="1"/>
</dbReference>
<dbReference type="FunFam" id="1.10.730.10:FF:000014">
    <property type="entry name" value="Valine--tRNA ligase"/>
    <property type="match status" value="1"/>
</dbReference>
<dbReference type="FunFam" id="3.40.50.620:FF:000032">
    <property type="entry name" value="Valine--tRNA ligase"/>
    <property type="match status" value="1"/>
</dbReference>
<dbReference type="FunFam" id="3.40.50.620:FF:000098">
    <property type="entry name" value="Valine--tRNA ligase"/>
    <property type="match status" value="1"/>
</dbReference>
<dbReference type="FunFam" id="3.90.740.10:FF:000005">
    <property type="entry name" value="Valine--tRNA ligase, mitochondrial"/>
    <property type="match status" value="1"/>
</dbReference>
<dbReference type="Gene3D" id="3.40.50.620">
    <property type="entry name" value="HUPs"/>
    <property type="match status" value="2"/>
</dbReference>
<dbReference type="Gene3D" id="1.10.730.10">
    <property type="entry name" value="Isoleucyl-tRNA Synthetase, Domain 1"/>
    <property type="match status" value="1"/>
</dbReference>
<dbReference type="Gene3D" id="1.10.287.380">
    <property type="entry name" value="Valyl-tRNA synthetase, C-terminal domain"/>
    <property type="match status" value="1"/>
</dbReference>
<dbReference type="Gene3D" id="3.90.740.10">
    <property type="entry name" value="Valyl/Leucyl/Isoleucyl-tRNA synthetase, editing domain"/>
    <property type="match status" value="1"/>
</dbReference>
<dbReference type="HAMAP" id="MF_02004">
    <property type="entry name" value="Val_tRNA_synth_type1"/>
    <property type="match status" value="1"/>
</dbReference>
<dbReference type="InterPro" id="IPR001412">
    <property type="entry name" value="aa-tRNA-synth_I_CS"/>
</dbReference>
<dbReference type="InterPro" id="IPR002300">
    <property type="entry name" value="aa-tRNA-synth_Ia"/>
</dbReference>
<dbReference type="InterPro" id="IPR033705">
    <property type="entry name" value="Anticodon_Ia_Val"/>
</dbReference>
<dbReference type="InterPro" id="IPR013155">
    <property type="entry name" value="M/V/L/I-tRNA-synth_anticd-bd"/>
</dbReference>
<dbReference type="InterPro" id="IPR014729">
    <property type="entry name" value="Rossmann-like_a/b/a_fold"/>
</dbReference>
<dbReference type="InterPro" id="IPR010978">
    <property type="entry name" value="tRNA-bd_arm"/>
</dbReference>
<dbReference type="InterPro" id="IPR009080">
    <property type="entry name" value="tRNAsynth_Ia_anticodon-bd"/>
</dbReference>
<dbReference type="InterPro" id="IPR037118">
    <property type="entry name" value="Val-tRNA_synth_C_sf"/>
</dbReference>
<dbReference type="InterPro" id="IPR019499">
    <property type="entry name" value="Val-tRNA_synth_tRNA-bd"/>
</dbReference>
<dbReference type="InterPro" id="IPR009008">
    <property type="entry name" value="Val/Leu/Ile-tRNA-synth_edit"/>
</dbReference>
<dbReference type="InterPro" id="IPR002303">
    <property type="entry name" value="Valyl-tRNA_ligase"/>
</dbReference>
<dbReference type="NCBIfam" id="NF004349">
    <property type="entry name" value="PRK05729.1"/>
    <property type="match status" value="1"/>
</dbReference>
<dbReference type="NCBIfam" id="TIGR00422">
    <property type="entry name" value="valS"/>
    <property type="match status" value="1"/>
</dbReference>
<dbReference type="PANTHER" id="PTHR11946:SF93">
    <property type="entry name" value="VALINE--TRNA LIGASE, CHLOROPLASTIC_MITOCHONDRIAL 2"/>
    <property type="match status" value="1"/>
</dbReference>
<dbReference type="PANTHER" id="PTHR11946">
    <property type="entry name" value="VALYL-TRNA SYNTHETASES"/>
    <property type="match status" value="1"/>
</dbReference>
<dbReference type="Pfam" id="PF08264">
    <property type="entry name" value="Anticodon_1"/>
    <property type="match status" value="1"/>
</dbReference>
<dbReference type="Pfam" id="PF00133">
    <property type="entry name" value="tRNA-synt_1"/>
    <property type="match status" value="2"/>
</dbReference>
<dbReference type="Pfam" id="PF10458">
    <property type="entry name" value="Val_tRNA-synt_C"/>
    <property type="match status" value="1"/>
</dbReference>
<dbReference type="PRINTS" id="PR00986">
    <property type="entry name" value="TRNASYNTHVAL"/>
</dbReference>
<dbReference type="SUPFAM" id="SSF47323">
    <property type="entry name" value="Anticodon-binding domain of a subclass of class I aminoacyl-tRNA synthetases"/>
    <property type="match status" value="1"/>
</dbReference>
<dbReference type="SUPFAM" id="SSF52374">
    <property type="entry name" value="Nucleotidylyl transferase"/>
    <property type="match status" value="1"/>
</dbReference>
<dbReference type="SUPFAM" id="SSF46589">
    <property type="entry name" value="tRNA-binding arm"/>
    <property type="match status" value="1"/>
</dbReference>
<dbReference type="SUPFAM" id="SSF50677">
    <property type="entry name" value="ValRS/IleRS/LeuRS editing domain"/>
    <property type="match status" value="1"/>
</dbReference>
<dbReference type="PROSITE" id="PS00178">
    <property type="entry name" value="AA_TRNA_LIGASE_I"/>
    <property type="match status" value="1"/>
</dbReference>
<proteinExistence type="inferred from homology"/>
<protein>
    <recommendedName>
        <fullName evidence="1">Valine--tRNA ligase</fullName>
        <ecNumber evidence="1">6.1.1.9</ecNumber>
    </recommendedName>
    <alternativeName>
        <fullName evidence="1">Valyl-tRNA synthetase</fullName>
        <shortName evidence="1">ValRS</shortName>
    </alternativeName>
</protein>
<evidence type="ECO:0000255" key="1">
    <source>
        <dbReference type="HAMAP-Rule" id="MF_02004"/>
    </source>
</evidence>
<accession>Q8E1B5</accession>
<comment type="function">
    <text evidence="1">Catalyzes the attachment of valine to tRNA(Val). As ValRS can inadvertently accommodate and process structurally similar amino acids such as threonine, to avoid such errors, it has a 'posttransfer' editing activity that hydrolyzes mischarged Thr-tRNA(Val) in a tRNA-dependent manner.</text>
</comment>
<comment type="catalytic activity">
    <reaction evidence="1">
        <text>tRNA(Val) + L-valine + ATP = L-valyl-tRNA(Val) + AMP + diphosphate</text>
        <dbReference type="Rhea" id="RHEA:10704"/>
        <dbReference type="Rhea" id="RHEA-COMP:9672"/>
        <dbReference type="Rhea" id="RHEA-COMP:9708"/>
        <dbReference type="ChEBI" id="CHEBI:30616"/>
        <dbReference type="ChEBI" id="CHEBI:33019"/>
        <dbReference type="ChEBI" id="CHEBI:57762"/>
        <dbReference type="ChEBI" id="CHEBI:78442"/>
        <dbReference type="ChEBI" id="CHEBI:78537"/>
        <dbReference type="ChEBI" id="CHEBI:456215"/>
        <dbReference type="EC" id="6.1.1.9"/>
    </reaction>
</comment>
<comment type="subunit">
    <text evidence="1">Monomer.</text>
</comment>
<comment type="subcellular location">
    <subcellularLocation>
        <location evidence="1">Cytoplasm</location>
    </subcellularLocation>
</comment>
<comment type="domain">
    <text evidence="1">ValRS has two distinct active sites: one for aminoacylation and one for editing. The misactivated threonine is translocated from the active site to the editing site.</text>
</comment>
<comment type="domain">
    <text evidence="1">The C-terminal coiled-coil domain is crucial for aminoacylation activity.</text>
</comment>
<comment type="similarity">
    <text evidence="1">Belongs to the class-I aminoacyl-tRNA synthetase family. ValS type 1 subfamily.</text>
</comment>
<feature type="chain" id="PRO_0000224572" description="Valine--tRNA ligase">
    <location>
        <begin position="1"/>
        <end position="883"/>
    </location>
</feature>
<feature type="coiled-coil region" evidence="1">
    <location>
        <begin position="809"/>
        <end position="844"/>
    </location>
</feature>
<feature type="short sequence motif" description="'HIGH' region">
    <location>
        <begin position="46"/>
        <end position="56"/>
    </location>
</feature>
<feature type="short sequence motif" description="'KMSKS' region">
    <location>
        <begin position="520"/>
        <end position="524"/>
    </location>
</feature>
<feature type="binding site" evidence="1">
    <location>
        <position position="523"/>
    </location>
    <ligand>
        <name>ATP</name>
        <dbReference type="ChEBI" id="CHEBI:30616"/>
    </ligand>
</feature>
<organism>
    <name type="scientific">Streptococcus agalactiae serotype V (strain ATCC BAA-611 / 2603 V/R)</name>
    <dbReference type="NCBI Taxonomy" id="208435"/>
    <lineage>
        <taxon>Bacteria</taxon>
        <taxon>Bacillati</taxon>
        <taxon>Bacillota</taxon>
        <taxon>Bacilli</taxon>
        <taxon>Lactobacillales</taxon>
        <taxon>Streptococcaceae</taxon>
        <taxon>Streptococcus</taxon>
    </lineage>
</organism>
<reference key="1">
    <citation type="journal article" date="2002" name="Proc. Natl. Acad. Sci. U.S.A.">
        <title>Complete genome sequence and comparative genomic analysis of an emerging human pathogen, serotype V Streptococcus agalactiae.</title>
        <authorList>
            <person name="Tettelin H."/>
            <person name="Masignani V."/>
            <person name="Cieslewicz M.J."/>
            <person name="Eisen J.A."/>
            <person name="Peterson S.N."/>
            <person name="Wessels M.R."/>
            <person name="Paulsen I.T."/>
            <person name="Nelson K.E."/>
            <person name="Margarit I."/>
            <person name="Read T.D."/>
            <person name="Madoff L.C."/>
            <person name="Wolf A.M."/>
            <person name="Beanan M.J."/>
            <person name="Brinkac L.M."/>
            <person name="Daugherty S.C."/>
            <person name="DeBoy R.T."/>
            <person name="Durkin A.S."/>
            <person name="Kolonay J.F."/>
            <person name="Madupu R."/>
            <person name="Lewis M.R."/>
            <person name="Radune D."/>
            <person name="Fedorova N.B."/>
            <person name="Scanlan D."/>
            <person name="Khouri H.M."/>
            <person name="Mulligan S."/>
            <person name="Carty H.A."/>
            <person name="Cline R.T."/>
            <person name="Van Aken S.E."/>
            <person name="Gill J."/>
            <person name="Scarselli M."/>
            <person name="Mora M."/>
            <person name="Iacobini E.T."/>
            <person name="Brettoni C."/>
            <person name="Galli G."/>
            <person name="Mariani M."/>
            <person name="Vegni F."/>
            <person name="Maione D."/>
            <person name="Rinaudo D."/>
            <person name="Rappuoli R."/>
            <person name="Telford J.L."/>
            <person name="Kasper D.L."/>
            <person name="Grandi G."/>
            <person name="Fraser C.M."/>
        </authorList>
    </citation>
    <scope>NUCLEOTIDE SEQUENCE [LARGE SCALE GENOMIC DNA]</scope>
    <source>
        <strain>ATCC BAA-611 / 2603 V/R</strain>
    </source>
</reference>
<keyword id="KW-0030">Aminoacyl-tRNA synthetase</keyword>
<keyword id="KW-0067">ATP-binding</keyword>
<keyword id="KW-0175">Coiled coil</keyword>
<keyword id="KW-0963">Cytoplasm</keyword>
<keyword id="KW-0436">Ligase</keyword>
<keyword id="KW-0547">Nucleotide-binding</keyword>
<keyword id="KW-0648">Protein biosynthesis</keyword>
<keyword id="KW-1185">Reference proteome</keyword>
<sequence>MSKELSPKYNPAEVEEGRYQTWLDQDVFKPSGDTEAKPYSIVIPPPNVTGKLHLGHAWDTTLQDIIIRQKRMQGFDTLWLPGMDHAGIATQAKVEERLREQGISRYDLGREKFLDKVWEWKDEYAATIKSQWGKMGLSVDYSRERFTLDEGLSKAVRKVFVDLYNKGWIYRGEFIINWDPAARTALSDIEVIHKDVEGAFYHMNYMLEDGSRALEVATTRPETMFGDVAVAVNPEDARYKDLIGQNVILPIINKPIPIVADEHADPEFGTGVVKITPAHDPNDFAVGQRHNLPQVNVMNDDGTMNELADEFNGMDRFEARKAVVAKLESLGNLVKIKKTTHSVGHSERTGVVVEPRLSTQWFVKMDQLAKNAIANQDTEDKVEFYPPRFNDTFMSWMENVHDWVISRQLWWGHQIPAWYNVNGEMYVGEDAPEGDGWTQDEDVLDTWFSSALWPFSTMGWPDTEAADFKRYFPTSTLVTGYDIIFFWVSRMIFQSLEFTGRQPFSNVLIHGLIRDEEGRKMSKSLGNGIDPMDVIEKYGADALRWFLSNGSAPGQDVRFSYEKMDASWNFINKIWNISRYILMNNEGLTLDQARENVEKVVNSQVGNVTDRWILHNLNETVGKVTENFDKFEFGVAGHILYNFIWEEFANWYVELTKEVLYSDNEDEKVITRSVLLYTLDQILRLLHPIMPFVTEEIFGQYAEGSIVLASYPQVNATFENQTAHKGVESLKDLIRSVRNSRAEVNVAPSKPITILVKTSDSELESFFKDNSNYIKRFTNPETLEISSAIATPELAMSSVITGAEIFLPLADLLNVEEELARLEKELAKWQKELDMVGKKLSNERFVANAKPEVVQKEKDKQTDYQTKYDATIARIEEMKKLVR</sequence>